<proteinExistence type="evidence at transcript level"/>
<reference evidence="5" key="1">
    <citation type="journal article" date="2019" name="Exp. Parasitol.">
        <title>Functional analysis of iron-sulfur cluster biogenesis (SUF pathway) from Plasmodium vivax clinical isolates.</title>
        <authorList>
            <person name="Pala Z.R."/>
            <person name="Saxena V."/>
            <person name="Saggu G.S."/>
            <person name="Mani S.K."/>
            <person name="Pareek R.P."/>
            <person name="Kochar S.K."/>
            <person name="Kochar D.K."/>
            <person name="Garg S."/>
        </authorList>
    </citation>
    <scope>NUCLEOTIDE SEQUENCE [MRNA]</scope>
    <scope>FUNCTION</scope>
    <scope>SUBCELLULAR LOCATION</scope>
    <source>
        <strain evidence="4">Indian</strain>
    </source>
</reference>
<sequence length="242" mass="27861">MKKREIKKICLLYLQIIVFYSIMVSSMRRGKHHSKKKGELKIIKRANPFGKKKINRGSKSHSLLYLKNCELRNSGRRNTHLRDLFDHLSGGQPLRDSNIEEYHLTPKLRKTVQFFQALPNDPYRKSQEVILLGRKCPPMPEELKNRGCQSTVYVHPTVEDREGKKIIAWVGDSDGLLTKGIVYILVDGLSGYPPEQILRVNPNFITLTGISEFLTMSRINGYLNIMNKMKAFSTSIMQNGER</sequence>
<name>SUFE_PLAVI</name>
<gene>
    <name evidence="4" type="primary">SufE</name>
</gene>
<feature type="chain" id="PRO_0000459483" description="Cysteine desulfuration protein SufE">
    <location>
        <begin position="1"/>
        <end position="242"/>
    </location>
</feature>
<feature type="active site" description="Cysteine persulfide intermediate" evidence="2">
    <location>
        <position position="148"/>
    </location>
</feature>
<evidence type="ECO:0000250" key="1">
    <source>
        <dbReference type="UniProtKB" id="O96155"/>
    </source>
</evidence>
<evidence type="ECO:0000250" key="2">
    <source>
        <dbReference type="UniProtKB" id="P76194"/>
    </source>
</evidence>
<evidence type="ECO:0000269" key="3">
    <source>
    </source>
</evidence>
<evidence type="ECO:0000303" key="4">
    <source>
    </source>
</evidence>
<evidence type="ECO:0000305" key="5"/>
<evidence type="ECO:0000312" key="6">
    <source>
        <dbReference type="EMBL" id="AQY09987.1"/>
    </source>
</evidence>
<comment type="function">
    <text evidence="2 3">Participates in sulfur mobilization (SUF) pathway for iron-sulfur (Fe-S) cluster biogenesis (PubMed:30721667). Enhances cysteine desulfurase activity of SufS (PubMed:30721667). Probably functions as a sulfur acceptor for SufS (By similarity).</text>
</comment>
<comment type="pathway">
    <text evidence="5">Cofactor biosynthesis; iron-sulfur cluster biosynthesis.</text>
</comment>
<comment type="subunit">
    <text evidence="1">Monomer (By similarity). Interacts with SufS; interaction enhances cysteine desulfurase activity of SufS (By similarity).</text>
</comment>
<comment type="subcellular location">
    <subcellularLocation>
        <location evidence="3">Plastid</location>
        <location evidence="3">Apicoplast</location>
    </subcellularLocation>
</comment>
<comment type="similarity">
    <text evidence="5">Belongs to the SufE family.</text>
</comment>
<keyword id="KW-0933">Apicoplast</keyword>
<keyword id="KW-0934">Plastid</keyword>
<dbReference type="EMBL" id="KY662009">
    <property type="protein sequence ID" value="AQY09987.1"/>
    <property type="molecule type" value="mRNA"/>
</dbReference>
<dbReference type="SMR" id="A0A2K8FTP3"/>
<dbReference type="VEuPathDB" id="PlasmoDB:PVP01_0419000"/>
<dbReference type="VEuPathDB" id="PlasmoDB:PVPAM_040029900"/>
<dbReference type="VEuPathDB" id="PlasmoDB:PVW1_040025500"/>
<dbReference type="VEuPathDB" id="PlasmoDB:PVX_003740"/>
<dbReference type="UniPathway" id="UPA00266"/>
<dbReference type="GO" id="GO:0020011">
    <property type="term" value="C:apicoplast"/>
    <property type="evidence" value="ECO:0007669"/>
    <property type="project" value="UniProtKB-SubCell"/>
</dbReference>
<dbReference type="Gene3D" id="3.90.1010.10">
    <property type="match status" value="1"/>
</dbReference>
<dbReference type="InterPro" id="IPR003808">
    <property type="entry name" value="Fe-S_metab-assoc_dom"/>
</dbReference>
<dbReference type="PANTHER" id="PTHR43597:SF5">
    <property type="entry name" value="SUFE-LIKE PROTEIN 2, CHLOROPLASTIC"/>
    <property type="match status" value="1"/>
</dbReference>
<dbReference type="PANTHER" id="PTHR43597">
    <property type="entry name" value="SULFUR ACCEPTOR PROTEIN CSDE"/>
    <property type="match status" value="1"/>
</dbReference>
<dbReference type="Pfam" id="PF02657">
    <property type="entry name" value="SufE"/>
    <property type="match status" value="1"/>
</dbReference>
<dbReference type="SUPFAM" id="SSF82649">
    <property type="entry name" value="SufE/NifU"/>
    <property type="match status" value="1"/>
</dbReference>
<organism evidence="6">
    <name type="scientific">Plasmodium vivax</name>
    <dbReference type="NCBI Taxonomy" id="5855"/>
    <lineage>
        <taxon>Eukaryota</taxon>
        <taxon>Sar</taxon>
        <taxon>Alveolata</taxon>
        <taxon>Apicomplexa</taxon>
        <taxon>Aconoidasida</taxon>
        <taxon>Haemosporida</taxon>
        <taxon>Plasmodiidae</taxon>
        <taxon>Plasmodium</taxon>
        <taxon>Plasmodium (Plasmodium)</taxon>
    </lineage>
</organism>
<accession>A0A2K8FTP3</accession>
<protein>
    <recommendedName>
        <fullName evidence="5">Cysteine desulfuration protein SufE</fullName>
        <shortName evidence="4">PvSufE</shortName>
    </recommendedName>
</protein>